<protein>
    <recommendedName>
        <fullName evidence="2">Small ribosomal subunit protein uS12</fullName>
    </recommendedName>
    <alternativeName>
        <fullName evidence="4">30S ribosomal protein S12</fullName>
    </alternativeName>
</protein>
<dbReference type="EMBL" id="CP000716">
    <property type="protein sequence ID" value="ABR30809.1"/>
    <property type="molecule type" value="Genomic_DNA"/>
</dbReference>
<dbReference type="RefSeq" id="WP_012057170.1">
    <property type="nucleotide sequence ID" value="NC_009616.1"/>
</dbReference>
<dbReference type="SMR" id="A6LLK8"/>
<dbReference type="STRING" id="391009.Tmel_0948"/>
<dbReference type="KEGG" id="tme:Tmel_0948"/>
<dbReference type="eggNOG" id="COG0048">
    <property type="taxonomic scope" value="Bacteria"/>
</dbReference>
<dbReference type="HOGENOM" id="CLU_104295_1_2_0"/>
<dbReference type="OrthoDB" id="9802366at2"/>
<dbReference type="Proteomes" id="UP000001110">
    <property type="component" value="Chromosome"/>
</dbReference>
<dbReference type="GO" id="GO:0015935">
    <property type="term" value="C:small ribosomal subunit"/>
    <property type="evidence" value="ECO:0007669"/>
    <property type="project" value="InterPro"/>
</dbReference>
<dbReference type="GO" id="GO:0019843">
    <property type="term" value="F:rRNA binding"/>
    <property type="evidence" value="ECO:0007669"/>
    <property type="project" value="UniProtKB-UniRule"/>
</dbReference>
<dbReference type="GO" id="GO:0003735">
    <property type="term" value="F:structural constituent of ribosome"/>
    <property type="evidence" value="ECO:0007669"/>
    <property type="project" value="InterPro"/>
</dbReference>
<dbReference type="GO" id="GO:0000049">
    <property type="term" value="F:tRNA binding"/>
    <property type="evidence" value="ECO:0007669"/>
    <property type="project" value="UniProtKB-UniRule"/>
</dbReference>
<dbReference type="GO" id="GO:0006412">
    <property type="term" value="P:translation"/>
    <property type="evidence" value="ECO:0007669"/>
    <property type="project" value="UniProtKB-UniRule"/>
</dbReference>
<dbReference type="CDD" id="cd03368">
    <property type="entry name" value="Ribosomal_S12"/>
    <property type="match status" value="1"/>
</dbReference>
<dbReference type="FunFam" id="2.40.50.140:FF:000001">
    <property type="entry name" value="30S ribosomal protein S12"/>
    <property type="match status" value="1"/>
</dbReference>
<dbReference type="Gene3D" id="2.40.50.140">
    <property type="entry name" value="Nucleic acid-binding proteins"/>
    <property type="match status" value="1"/>
</dbReference>
<dbReference type="HAMAP" id="MF_00403_B">
    <property type="entry name" value="Ribosomal_uS12_B"/>
    <property type="match status" value="1"/>
</dbReference>
<dbReference type="InterPro" id="IPR012340">
    <property type="entry name" value="NA-bd_OB-fold"/>
</dbReference>
<dbReference type="InterPro" id="IPR006032">
    <property type="entry name" value="Ribosomal_uS12"/>
</dbReference>
<dbReference type="InterPro" id="IPR005679">
    <property type="entry name" value="Ribosomal_uS12_bac"/>
</dbReference>
<dbReference type="NCBIfam" id="TIGR00981">
    <property type="entry name" value="rpsL_bact"/>
    <property type="match status" value="1"/>
</dbReference>
<dbReference type="PANTHER" id="PTHR11652">
    <property type="entry name" value="30S RIBOSOMAL PROTEIN S12 FAMILY MEMBER"/>
    <property type="match status" value="1"/>
</dbReference>
<dbReference type="Pfam" id="PF00164">
    <property type="entry name" value="Ribosom_S12_S23"/>
    <property type="match status" value="1"/>
</dbReference>
<dbReference type="PIRSF" id="PIRSF002133">
    <property type="entry name" value="Ribosomal_S12/S23"/>
    <property type="match status" value="1"/>
</dbReference>
<dbReference type="PRINTS" id="PR01034">
    <property type="entry name" value="RIBOSOMALS12"/>
</dbReference>
<dbReference type="SUPFAM" id="SSF50249">
    <property type="entry name" value="Nucleic acid-binding proteins"/>
    <property type="match status" value="1"/>
</dbReference>
<dbReference type="PROSITE" id="PS00055">
    <property type="entry name" value="RIBOSOMAL_S12"/>
    <property type="match status" value="1"/>
</dbReference>
<accession>A6LLK8</accession>
<comment type="function">
    <text evidence="2">With S4 and S5 plays an important role in translational accuracy.</text>
</comment>
<comment type="function">
    <text evidence="2">Interacts with and stabilizes bases of the 16S rRNA that are involved in tRNA selection in the A site and with the mRNA backbone. Located at the interface of the 30S and 50S subunits, it traverses the body of the 30S subunit contacting proteins on the other side and probably holding the rRNA structure together. The combined cluster of proteins S8, S12 and S17 appears to hold together the shoulder and platform of the 30S subunit.</text>
</comment>
<comment type="subunit">
    <text evidence="2">Part of the 30S ribosomal subunit. Contacts proteins S8 and S17. May interact with IF1 in the 30S initiation complex.</text>
</comment>
<comment type="similarity">
    <text evidence="2">Belongs to the universal ribosomal protein uS12 family.</text>
</comment>
<proteinExistence type="inferred from homology"/>
<gene>
    <name evidence="2" type="primary">rpsL</name>
    <name type="ordered locus">Tmel_0948</name>
</gene>
<reference key="1">
    <citation type="submission" date="2007-05" db="EMBL/GenBank/DDBJ databases">
        <title>Complete sequence of Thermosipho melanesiensis BI429.</title>
        <authorList>
            <consortium name="US DOE Joint Genome Institute"/>
            <person name="Copeland A."/>
            <person name="Lucas S."/>
            <person name="Lapidus A."/>
            <person name="Barry K."/>
            <person name="Glavina del Rio T."/>
            <person name="Dalin E."/>
            <person name="Tice H."/>
            <person name="Pitluck S."/>
            <person name="Chertkov O."/>
            <person name="Brettin T."/>
            <person name="Bruce D."/>
            <person name="Detter J.C."/>
            <person name="Han C."/>
            <person name="Schmutz J."/>
            <person name="Larimer F."/>
            <person name="Land M."/>
            <person name="Hauser L."/>
            <person name="Kyrpides N."/>
            <person name="Mikhailova N."/>
            <person name="Nelson K."/>
            <person name="Gogarten J.P."/>
            <person name="Noll K."/>
            <person name="Richardson P."/>
        </authorList>
    </citation>
    <scope>NUCLEOTIDE SEQUENCE [LARGE SCALE GENOMIC DNA]</scope>
    <source>
        <strain>DSM 12029 / CIP 104789 / BI429</strain>
    </source>
</reference>
<sequence>MPTINQLVRHGRKVIKEKSKSPALQGHPQKRGVCVRVSTMTPKKPNSALRKIARVRLSNGIEVTAYIPGIGHNLQEHSVVLVRGGRVKDLPGIRYKIIRGALDTDGVENRKQSRSKYGTKRPKK</sequence>
<feature type="chain" id="PRO_1000049817" description="Small ribosomal subunit protein uS12">
    <location>
        <begin position="1"/>
        <end position="124"/>
    </location>
</feature>
<feature type="region of interest" description="Disordered" evidence="3">
    <location>
        <begin position="104"/>
        <end position="124"/>
    </location>
</feature>
<feature type="compositionally biased region" description="Basic residues" evidence="3">
    <location>
        <begin position="112"/>
        <end position="124"/>
    </location>
</feature>
<feature type="modified residue" description="3-methylthioaspartic acid" evidence="1">
    <location>
        <position position="89"/>
    </location>
</feature>
<evidence type="ECO:0000250" key="1"/>
<evidence type="ECO:0000255" key="2">
    <source>
        <dbReference type="HAMAP-Rule" id="MF_00403"/>
    </source>
</evidence>
<evidence type="ECO:0000256" key="3">
    <source>
        <dbReference type="SAM" id="MobiDB-lite"/>
    </source>
</evidence>
<evidence type="ECO:0000305" key="4"/>
<keyword id="KW-0488">Methylation</keyword>
<keyword id="KW-0687">Ribonucleoprotein</keyword>
<keyword id="KW-0689">Ribosomal protein</keyword>
<keyword id="KW-0694">RNA-binding</keyword>
<keyword id="KW-0699">rRNA-binding</keyword>
<keyword id="KW-0820">tRNA-binding</keyword>
<name>RS12_THEM4</name>
<organism>
    <name type="scientific">Thermosipho melanesiensis (strain DSM 12029 / CIP 104789 / BI429)</name>
    <dbReference type="NCBI Taxonomy" id="391009"/>
    <lineage>
        <taxon>Bacteria</taxon>
        <taxon>Thermotogati</taxon>
        <taxon>Thermotogota</taxon>
        <taxon>Thermotogae</taxon>
        <taxon>Thermotogales</taxon>
        <taxon>Fervidobacteriaceae</taxon>
        <taxon>Thermosipho</taxon>
    </lineage>
</organism>